<gene>
    <name evidence="1" type="primary">trmA</name>
    <name type="ordered locus">ECUMN_4496</name>
</gene>
<accession>B7NFR5</accession>
<comment type="function">
    <text evidence="1">Dual-specificity methyltransferase that catalyzes the formation of 5-methyluridine at position 54 (m5U54) in all tRNAs, and that of position 341 (m5U341) in tmRNA (transfer-mRNA).</text>
</comment>
<comment type="catalytic activity">
    <reaction evidence="1">
        <text>uridine(54) in tRNA + S-adenosyl-L-methionine = 5-methyluridine(54) in tRNA + S-adenosyl-L-homocysteine + H(+)</text>
        <dbReference type="Rhea" id="RHEA:42712"/>
        <dbReference type="Rhea" id="RHEA-COMP:10167"/>
        <dbReference type="Rhea" id="RHEA-COMP:10193"/>
        <dbReference type="ChEBI" id="CHEBI:15378"/>
        <dbReference type="ChEBI" id="CHEBI:57856"/>
        <dbReference type="ChEBI" id="CHEBI:59789"/>
        <dbReference type="ChEBI" id="CHEBI:65315"/>
        <dbReference type="ChEBI" id="CHEBI:74447"/>
        <dbReference type="EC" id="2.1.1.35"/>
    </reaction>
</comment>
<comment type="catalytic activity">
    <reaction evidence="1">
        <text>uridine(341) in tmRNA + S-adenosyl-L-methionine = 5-methyluridine(341) in tmRNA + S-adenosyl-L-homocysteine + H(+)</text>
        <dbReference type="Rhea" id="RHEA:43612"/>
        <dbReference type="Rhea" id="RHEA-COMP:10630"/>
        <dbReference type="Rhea" id="RHEA-COMP:10631"/>
        <dbReference type="ChEBI" id="CHEBI:15378"/>
        <dbReference type="ChEBI" id="CHEBI:57856"/>
        <dbReference type="ChEBI" id="CHEBI:59789"/>
        <dbReference type="ChEBI" id="CHEBI:65315"/>
        <dbReference type="ChEBI" id="CHEBI:74447"/>
    </reaction>
</comment>
<comment type="similarity">
    <text evidence="1">Belongs to the class I-like SAM-binding methyltransferase superfamily. RNA M5U methyltransferase family. TrmA subfamily.</text>
</comment>
<organism>
    <name type="scientific">Escherichia coli O17:K52:H18 (strain UMN026 / ExPEC)</name>
    <dbReference type="NCBI Taxonomy" id="585056"/>
    <lineage>
        <taxon>Bacteria</taxon>
        <taxon>Pseudomonadati</taxon>
        <taxon>Pseudomonadota</taxon>
        <taxon>Gammaproteobacteria</taxon>
        <taxon>Enterobacterales</taxon>
        <taxon>Enterobacteriaceae</taxon>
        <taxon>Escherichia</taxon>
    </lineage>
</organism>
<feature type="chain" id="PRO_1000198542" description="tRNA/tmRNA (uracil-C(5))-methyltransferase">
    <location>
        <begin position="1"/>
        <end position="366"/>
    </location>
</feature>
<feature type="active site" description="Nucleophile" evidence="1">
    <location>
        <position position="324"/>
    </location>
</feature>
<feature type="active site" description="Proton acceptor" evidence="1">
    <location>
        <position position="358"/>
    </location>
</feature>
<feature type="binding site" evidence="1">
    <location>
        <position position="190"/>
    </location>
    <ligand>
        <name>S-adenosyl-L-methionine</name>
        <dbReference type="ChEBI" id="CHEBI:59789"/>
    </ligand>
</feature>
<feature type="binding site" evidence="1">
    <location>
        <position position="218"/>
    </location>
    <ligand>
        <name>S-adenosyl-L-methionine</name>
        <dbReference type="ChEBI" id="CHEBI:59789"/>
    </ligand>
</feature>
<feature type="binding site" evidence="1">
    <location>
        <position position="223"/>
    </location>
    <ligand>
        <name>S-adenosyl-L-methionine</name>
        <dbReference type="ChEBI" id="CHEBI:59789"/>
    </ligand>
</feature>
<feature type="binding site" evidence="1">
    <location>
        <position position="239"/>
    </location>
    <ligand>
        <name>S-adenosyl-L-methionine</name>
        <dbReference type="ChEBI" id="CHEBI:59789"/>
    </ligand>
</feature>
<feature type="binding site" evidence="1">
    <location>
        <position position="299"/>
    </location>
    <ligand>
        <name>S-adenosyl-L-methionine</name>
        <dbReference type="ChEBI" id="CHEBI:59789"/>
    </ligand>
</feature>
<dbReference type="EC" id="2.1.1.-" evidence="1"/>
<dbReference type="EC" id="2.1.1.35" evidence="1"/>
<dbReference type="EMBL" id="CU928163">
    <property type="protein sequence ID" value="CAR15622.1"/>
    <property type="molecule type" value="Genomic_DNA"/>
</dbReference>
<dbReference type="RefSeq" id="WP_000187018.1">
    <property type="nucleotide sequence ID" value="NC_011751.1"/>
</dbReference>
<dbReference type="RefSeq" id="YP_002415111.1">
    <property type="nucleotide sequence ID" value="NC_011751.1"/>
</dbReference>
<dbReference type="SMR" id="B7NFR5"/>
<dbReference type="STRING" id="585056.ECUMN_4496"/>
<dbReference type="KEGG" id="eum:ECUMN_4496"/>
<dbReference type="PATRIC" id="fig|585056.7.peg.4666"/>
<dbReference type="HOGENOM" id="CLU_043022_0_0_6"/>
<dbReference type="Proteomes" id="UP000007097">
    <property type="component" value="Chromosome"/>
</dbReference>
<dbReference type="GO" id="GO:0005829">
    <property type="term" value="C:cytosol"/>
    <property type="evidence" value="ECO:0007669"/>
    <property type="project" value="TreeGrafter"/>
</dbReference>
<dbReference type="GO" id="GO:0019843">
    <property type="term" value="F:rRNA binding"/>
    <property type="evidence" value="ECO:0007669"/>
    <property type="project" value="TreeGrafter"/>
</dbReference>
<dbReference type="GO" id="GO:0030697">
    <property type="term" value="F:tRNA (uracil(54)-C5)-methyltransferase activity, S-adenosyl methionine-dependent"/>
    <property type="evidence" value="ECO:0007669"/>
    <property type="project" value="UniProtKB-UniRule"/>
</dbReference>
<dbReference type="GO" id="GO:0000049">
    <property type="term" value="F:tRNA binding"/>
    <property type="evidence" value="ECO:0007669"/>
    <property type="project" value="TreeGrafter"/>
</dbReference>
<dbReference type="GO" id="GO:0030488">
    <property type="term" value="P:tRNA methylation"/>
    <property type="evidence" value="ECO:0007669"/>
    <property type="project" value="UniProtKB-UniRule"/>
</dbReference>
<dbReference type="CDD" id="cd02440">
    <property type="entry name" value="AdoMet_MTases"/>
    <property type="match status" value="1"/>
</dbReference>
<dbReference type="FunFam" id="2.40.50.1070:FF:000001">
    <property type="entry name" value="tRNA/tmRNA (uracil-C(5))-methyltransferase"/>
    <property type="match status" value="1"/>
</dbReference>
<dbReference type="FunFam" id="3.40.50.150:FF:000012">
    <property type="entry name" value="tRNA/tmRNA (uracil-C(5))-methyltransferase"/>
    <property type="match status" value="1"/>
</dbReference>
<dbReference type="Gene3D" id="2.40.50.1070">
    <property type="match status" value="1"/>
</dbReference>
<dbReference type="Gene3D" id="3.40.50.150">
    <property type="entry name" value="Vaccinia Virus protein VP39"/>
    <property type="match status" value="1"/>
</dbReference>
<dbReference type="HAMAP" id="MF_01011">
    <property type="entry name" value="RNA_methyltr_TrmA"/>
    <property type="match status" value="1"/>
</dbReference>
<dbReference type="InterPro" id="IPR030390">
    <property type="entry name" value="MeTrfase_TrmA_AS"/>
</dbReference>
<dbReference type="InterPro" id="IPR030391">
    <property type="entry name" value="MeTrfase_TrmA_CS"/>
</dbReference>
<dbReference type="InterPro" id="IPR029063">
    <property type="entry name" value="SAM-dependent_MTases_sf"/>
</dbReference>
<dbReference type="InterPro" id="IPR011869">
    <property type="entry name" value="TrmA_MeTrfase"/>
</dbReference>
<dbReference type="InterPro" id="IPR010280">
    <property type="entry name" value="U5_MeTrfase_fam"/>
</dbReference>
<dbReference type="NCBIfam" id="TIGR02143">
    <property type="entry name" value="trmA_only"/>
    <property type="match status" value="1"/>
</dbReference>
<dbReference type="PANTHER" id="PTHR47790">
    <property type="entry name" value="TRNA/TMRNA (URACIL-C(5))-METHYLTRANSFERASE"/>
    <property type="match status" value="1"/>
</dbReference>
<dbReference type="PANTHER" id="PTHR47790:SF2">
    <property type="entry name" value="TRNA_TMRNA (URACIL-C(5))-METHYLTRANSFERASE"/>
    <property type="match status" value="1"/>
</dbReference>
<dbReference type="Pfam" id="PF05958">
    <property type="entry name" value="tRNA_U5-meth_tr"/>
    <property type="match status" value="1"/>
</dbReference>
<dbReference type="SUPFAM" id="SSF53335">
    <property type="entry name" value="S-adenosyl-L-methionine-dependent methyltransferases"/>
    <property type="match status" value="1"/>
</dbReference>
<dbReference type="PROSITE" id="PS51687">
    <property type="entry name" value="SAM_MT_RNA_M5U"/>
    <property type="match status" value="1"/>
</dbReference>
<dbReference type="PROSITE" id="PS01230">
    <property type="entry name" value="TRMA_1"/>
    <property type="match status" value="1"/>
</dbReference>
<dbReference type="PROSITE" id="PS01231">
    <property type="entry name" value="TRMA_2"/>
    <property type="match status" value="1"/>
</dbReference>
<name>TRMA_ECOLU</name>
<protein>
    <recommendedName>
        <fullName evidence="1">tRNA/tmRNA (uracil-C(5))-methyltransferase</fullName>
        <ecNumber evidence="1">2.1.1.-</ecNumber>
        <ecNumber evidence="1">2.1.1.35</ecNumber>
    </recommendedName>
    <alternativeName>
        <fullName evidence="1">tRNA (uracil(54)-C(5))-methyltransferase</fullName>
    </alternativeName>
    <alternativeName>
        <fullName evidence="1">tRNA(m5U54)-methyltransferase</fullName>
        <shortName evidence="1">RUMT</shortName>
    </alternativeName>
    <alternativeName>
        <fullName evidence="1">tmRNA (uracil(341)-C(5))-methyltransferase</fullName>
    </alternativeName>
</protein>
<evidence type="ECO:0000255" key="1">
    <source>
        <dbReference type="HAMAP-Rule" id="MF_01011"/>
    </source>
</evidence>
<proteinExistence type="inferred from homology"/>
<reference key="1">
    <citation type="journal article" date="2009" name="PLoS Genet.">
        <title>Organised genome dynamics in the Escherichia coli species results in highly diverse adaptive paths.</title>
        <authorList>
            <person name="Touchon M."/>
            <person name="Hoede C."/>
            <person name="Tenaillon O."/>
            <person name="Barbe V."/>
            <person name="Baeriswyl S."/>
            <person name="Bidet P."/>
            <person name="Bingen E."/>
            <person name="Bonacorsi S."/>
            <person name="Bouchier C."/>
            <person name="Bouvet O."/>
            <person name="Calteau A."/>
            <person name="Chiapello H."/>
            <person name="Clermont O."/>
            <person name="Cruveiller S."/>
            <person name="Danchin A."/>
            <person name="Diard M."/>
            <person name="Dossat C."/>
            <person name="Karoui M.E."/>
            <person name="Frapy E."/>
            <person name="Garry L."/>
            <person name="Ghigo J.M."/>
            <person name="Gilles A.M."/>
            <person name="Johnson J."/>
            <person name="Le Bouguenec C."/>
            <person name="Lescat M."/>
            <person name="Mangenot S."/>
            <person name="Martinez-Jehanne V."/>
            <person name="Matic I."/>
            <person name="Nassif X."/>
            <person name="Oztas S."/>
            <person name="Petit M.A."/>
            <person name="Pichon C."/>
            <person name="Rouy Z."/>
            <person name="Ruf C.S."/>
            <person name="Schneider D."/>
            <person name="Tourret J."/>
            <person name="Vacherie B."/>
            <person name="Vallenet D."/>
            <person name="Medigue C."/>
            <person name="Rocha E.P.C."/>
            <person name="Denamur E."/>
        </authorList>
    </citation>
    <scope>NUCLEOTIDE SEQUENCE [LARGE SCALE GENOMIC DNA]</scope>
    <source>
        <strain>UMN026 / ExPEC</strain>
    </source>
</reference>
<keyword id="KW-0489">Methyltransferase</keyword>
<keyword id="KW-0949">S-adenosyl-L-methionine</keyword>
<keyword id="KW-0808">Transferase</keyword>
<keyword id="KW-0819">tRNA processing</keyword>
<sequence>MTPEHLPTEQYEAQLAEKVVRLQSMMAPFSDLVPEVFRSPVSHYRMRAEFRIWHDGDDLYHIIFDQQTKSRIRVDSFPAASELINQLMTAMIAGVRNNPVLRHKLFQIDYLTTLSNQAVVSLLYHKKLDDEWRQEAEALRDALRAQNLNVHLIGRATKTKIELDQDYIDERLPVAGKEMIYRQVENSFTQPNAAMNIQMLEWALDVTKGSKGDLLELYCGNGNFSLALARNFDRVLATEIAKPSVAAAQYNIAANHIDNVQIIRMAAEEFTQAMNGVREFNRLQGIDLKSYQCETIFVDPPRSGLDGETEKMVQAYPRILYISCNPETLCKNLETLSQTHKVERLALFDQFPYTHHMECGVLLTAK</sequence>